<accession>C1KVP1</accession>
<name>EZRA_LISMC</name>
<protein>
    <recommendedName>
        <fullName evidence="1">Septation ring formation regulator EzrA</fullName>
    </recommendedName>
</protein>
<gene>
    <name evidence="1" type="primary">ezrA</name>
    <name type="ordered locus">Lm4b_01605</name>
</gene>
<evidence type="ECO:0000255" key="1">
    <source>
        <dbReference type="HAMAP-Rule" id="MF_00728"/>
    </source>
</evidence>
<reference key="1">
    <citation type="journal article" date="2012" name="BMC Genomics">
        <title>Comparative genomics and transcriptomics of lineages I, II, and III strains of Listeria monocytogenes.</title>
        <authorList>
            <person name="Hain T."/>
            <person name="Ghai R."/>
            <person name="Billion A."/>
            <person name="Kuenne C.T."/>
            <person name="Steinweg C."/>
            <person name="Izar B."/>
            <person name="Mohamed W."/>
            <person name="Mraheil M."/>
            <person name="Domann E."/>
            <person name="Schaffrath S."/>
            <person name="Karst U."/>
            <person name="Goesmann A."/>
            <person name="Oehm S."/>
            <person name="Puhler A."/>
            <person name="Merkl R."/>
            <person name="Vorwerk S."/>
            <person name="Glaser P."/>
            <person name="Garrido P."/>
            <person name="Rusniok C."/>
            <person name="Buchrieser C."/>
            <person name="Goebel W."/>
            <person name="Chakraborty T."/>
        </authorList>
    </citation>
    <scope>NUCLEOTIDE SEQUENCE [LARGE SCALE GENOMIC DNA]</scope>
    <source>
        <strain>CLIP80459</strain>
    </source>
</reference>
<dbReference type="EMBL" id="FM242711">
    <property type="protein sequence ID" value="CAS05366.1"/>
    <property type="molecule type" value="Genomic_DNA"/>
</dbReference>
<dbReference type="RefSeq" id="WP_003726006.1">
    <property type="nucleotide sequence ID" value="NC_012488.1"/>
</dbReference>
<dbReference type="SMR" id="C1KVP1"/>
<dbReference type="KEGG" id="lmc:Lm4b_01605"/>
<dbReference type="HOGENOM" id="CLU_034079_2_0_9"/>
<dbReference type="GO" id="GO:0005886">
    <property type="term" value="C:plasma membrane"/>
    <property type="evidence" value="ECO:0007669"/>
    <property type="project" value="UniProtKB-SubCell"/>
</dbReference>
<dbReference type="GO" id="GO:0005940">
    <property type="term" value="C:septin ring"/>
    <property type="evidence" value="ECO:0007669"/>
    <property type="project" value="InterPro"/>
</dbReference>
<dbReference type="GO" id="GO:0000917">
    <property type="term" value="P:division septum assembly"/>
    <property type="evidence" value="ECO:0007669"/>
    <property type="project" value="UniProtKB-KW"/>
</dbReference>
<dbReference type="GO" id="GO:0000921">
    <property type="term" value="P:septin ring assembly"/>
    <property type="evidence" value="ECO:0007669"/>
    <property type="project" value="InterPro"/>
</dbReference>
<dbReference type="HAMAP" id="MF_00728">
    <property type="entry name" value="EzrA"/>
    <property type="match status" value="1"/>
</dbReference>
<dbReference type="InterPro" id="IPR010379">
    <property type="entry name" value="EzrA"/>
</dbReference>
<dbReference type="NCBIfam" id="NF003408">
    <property type="entry name" value="PRK04778.1-2"/>
    <property type="match status" value="1"/>
</dbReference>
<dbReference type="Pfam" id="PF06160">
    <property type="entry name" value="EzrA"/>
    <property type="match status" value="1"/>
</dbReference>
<comment type="function">
    <text evidence="1">Negative regulator of FtsZ ring formation; modulates the frequency and position of FtsZ ring formation. Inhibits FtsZ ring formation at polar sites. Interacts either with FtsZ or with one of its binding partners to promote depolymerization.</text>
</comment>
<comment type="subcellular location">
    <subcellularLocation>
        <location evidence="1">Cell membrane</location>
        <topology evidence="1">Single-pass membrane protein</topology>
    </subcellularLocation>
    <text evidence="1">Colocalized with FtsZ to the nascent septal site.</text>
</comment>
<comment type="similarity">
    <text evidence="1">Belongs to the EzrA family.</text>
</comment>
<feature type="chain" id="PRO_1000212730" description="Septation ring formation regulator EzrA">
    <location>
        <begin position="1"/>
        <end position="571"/>
    </location>
</feature>
<feature type="topological domain" description="Extracellular" evidence="1">
    <location>
        <begin position="1"/>
        <end position="3"/>
    </location>
</feature>
<feature type="transmembrane region" description="Helical" evidence="1">
    <location>
        <begin position="4"/>
        <end position="22"/>
    </location>
</feature>
<feature type="topological domain" description="Cytoplasmic" evidence="1">
    <location>
        <begin position="23"/>
        <end position="571"/>
    </location>
</feature>
<feature type="coiled-coil region" evidence="1">
    <location>
        <begin position="248"/>
        <end position="298"/>
    </location>
</feature>
<feature type="coiled-coil region" evidence="1">
    <location>
        <begin position="326"/>
        <end position="374"/>
    </location>
</feature>
<feature type="coiled-coil region" evidence="1">
    <location>
        <begin position="400"/>
        <end position="437"/>
    </location>
</feature>
<feature type="coiled-coil region" evidence="1">
    <location>
        <begin position="478"/>
        <end position="529"/>
    </location>
</feature>
<sequence>MYYMLIGFIIVVIAVIGAGYILKRKHYQRINELEEKKIKLRERPVIDELSKVKKLKLTGQTEALFESWRSSWDEIETRLFPDLEEVLLEAEMNTDRYKFRSATHAENDIEQMLVVIEKQMDQILGGLKELLISEEKNAKESRATKEKFAELRREVLTRGFKLGETLPYIETKLSELSESLNSYDSLTDQGDHLEAREIVIVVQKEMQVIEAQMERIPSLLHETDTILPEEMTKLRAGYEEMVRKGYYLAQMELDKEISRMKNQIDKMKKNVINLDLDEAEQGVEELHNEIDLFYDTLEHEAEARHFVKENHSPTSDKLQRQNAVSDALAEQITEVKQTYHVAEDDLAVYLKTSAKLSEAKENFEQLTALIASGEIAYSAAQDTLKEIDAALITISAEQDKFAEELRSLRKDELEARDDAERMRRAIITLDRKMERERLPGLPEEYLSLREHMGESINALEKRLEEKPLNMKAVSQDWRIAEEDLTHLTEKAEEMMENVRLVEHVIQYANRYRLRNKELADELVQAENHFYNDYQYKKALEIAVTALEKVETGAFKKVEKAYESKVSVDDIE</sequence>
<proteinExistence type="inferred from homology"/>
<keyword id="KW-0131">Cell cycle</keyword>
<keyword id="KW-0132">Cell division</keyword>
<keyword id="KW-1003">Cell membrane</keyword>
<keyword id="KW-0175">Coiled coil</keyword>
<keyword id="KW-0472">Membrane</keyword>
<keyword id="KW-0717">Septation</keyword>
<keyword id="KW-0812">Transmembrane</keyword>
<keyword id="KW-1133">Transmembrane helix</keyword>
<organism>
    <name type="scientific">Listeria monocytogenes serotype 4b (strain CLIP80459)</name>
    <dbReference type="NCBI Taxonomy" id="568819"/>
    <lineage>
        <taxon>Bacteria</taxon>
        <taxon>Bacillati</taxon>
        <taxon>Bacillota</taxon>
        <taxon>Bacilli</taxon>
        <taxon>Bacillales</taxon>
        <taxon>Listeriaceae</taxon>
        <taxon>Listeria</taxon>
    </lineage>
</organism>